<dbReference type="EC" id="2.7.2.8" evidence="1"/>
<dbReference type="EMBL" id="CP000103">
    <property type="protein sequence ID" value="ABB74419.1"/>
    <property type="molecule type" value="Genomic_DNA"/>
</dbReference>
<dbReference type="RefSeq" id="WP_011380460.1">
    <property type="nucleotide sequence ID" value="NC_007614.1"/>
</dbReference>
<dbReference type="SMR" id="Q2YA02"/>
<dbReference type="STRING" id="323848.Nmul_A1116"/>
<dbReference type="KEGG" id="nmu:Nmul_A1116"/>
<dbReference type="eggNOG" id="COG0548">
    <property type="taxonomic scope" value="Bacteria"/>
</dbReference>
<dbReference type="HOGENOM" id="CLU_053680_0_0_4"/>
<dbReference type="OrthoDB" id="9803155at2"/>
<dbReference type="UniPathway" id="UPA00068">
    <property type="reaction ID" value="UER00107"/>
</dbReference>
<dbReference type="Proteomes" id="UP000002718">
    <property type="component" value="Chromosome"/>
</dbReference>
<dbReference type="GO" id="GO:0005737">
    <property type="term" value="C:cytoplasm"/>
    <property type="evidence" value="ECO:0007669"/>
    <property type="project" value="UniProtKB-SubCell"/>
</dbReference>
<dbReference type="GO" id="GO:0003991">
    <property type="term" value="F:acetylglutamate kinase activity"/>
    <property type="evidence" value="ECO:0007669"/>
    <property type="project" value="UniProtKB-UniRule"/>
</dbReference>
<dbReference type="GO" id="GO:0005524">
    <property type="term" value="F:ATP binding"/>
    <property type="evidence" value="ECO:0007669"/>
    <property type="project" value="UniProtKB-UniRule"/>
</dbReference>
<dbReference type="GO" id="GO:0042450">
    <property type="term" value="P:arginine biosynthetic process via ornithine"/>
    <property type="evidence" value="ECO:0007669"/>
    <property type="project" value="UniProtKB-UniRule"/>
</dbReference>
<dbReference type="GO" id="GO:0006526">
    <property type="term" value="P:L-arginine biosynthetic process"/>
    <property type="evidence" value="ECO:0007669"/>
    <property type="project" value="UniProtKB-UniPathway"/>
</dbReference>
<dbReference type="CDD" id="cd04250">
    <property type="entry name" value="AAK_NAGK-C"/>
    <property type="match status" value="1"/>
</dbReference>
<dbReference type="FunFam" id="3.40.1160.10:FF:000004">
    <property type="entry name" value="Acetylglutamate kinase"/>
    <property type="match status" value="1"/>
</dbReference>
<dbReference type="Gene3D" id="3.40.1160.10">
    <property type="entry name" value="Acetylglutamate kinase-like"/>
    <property type="match status" value="1"/>
</dbReference>
<dbReference type="HAMAP" id="MF_00082">
    <property type="entry name" value="ArgB"/>
    <property type="match status" value="1"/>
</dbReference>
<dbReference type="InterPro" id="IPR036393">
    <property type="entry name" value="AceGlu_kinase-like_sf"/>
</dbReference>
<dbReference type="InterPro" id="IPR004662">
    <property type="entry name" value="AcgluKinase_fam"/>
</dbReference>
<dbReference type="InterPro" id="IPR037528">
    <property type="entry name" value="ArgB"/>
</dbReference>
<dbReference type="InterPro" id="IPR001048">
    <property type="entry name" value="Asp/Glu/Uridylate_kinase"/>
</dbReference>
<dbReference type="InterPro" id="IPR001057">
    <property type="entry name" value="Glu/AcGlu_kinase"/>
</dbReference>
<dbReference type="InterPro" id="IPR041727">
    <property type="entry name" value="NAGK-C"/>
</dbReference>
<dbReference type="NCBIfam" id="TIGR00761">
    <property type="entry name" value="argB"/>
    <property type="match status" value="1"/>
</dbReference>
<dbReference type="PANTHER" id="PTHR23342">
    <property type="entry name" value="N-ACETYLGLUTAMATE SYNTHASE"/>
    <property type="match status" value="1"/>
</dbReference>
<dbReference type="PANTHER" id="PTHR23342:SF0">
    <property type="entry name" value="N-ACETYLGLUTAMATE SYNTHASE, MITOCHONDRIAL"/>
    <property type="match status" value="1"/>
</dbReference>
<dbReference type="Pfam" id="PF00696">
    <property type="entry name" value="AA_kinase"/>
    <property type="match status" value="1"/>
</dbReference>
<dbReference type="PIRSF" id="PIRSF000728">
    <property type="entry name" value="NAGK"/>
    <property type="match status" value="1"/>
</dbReference>
<dbReference type="PRINTS" id="PR00474">
    <property type="entry name" value="GLU5KINASE"/>
</dbReference>
<dbReference type="SUPFAM" id="SSF53633">
    <property type="entry name" value="Carbamate kinase-like"/>
    <property type="match status" value="1"/>
</dbReference>
<feature type="chain" id="PRO_0000264726" description="Acetylglutamate kinase">
    <location>
        <begin position="1"/>
        <end position="293"/>
    </location>
</feature>
<feature type="binding site" evidence="1">
    <location>
        <begin position="67"/>
        <end position="68"/>
    </location>
    <ligand>
        <name>substrate</name>
    </ligand>
</feature>
<feature type="binding site" evidence="1">
    <location>
        <position position="89"/>
    </location>
    <ligand>
        <name>substrate</name>
    </ligand>
</feature>
<feature type="binding site" evidence="1">
    <location>
        <position position="190"/>
    </location>
    <ligand>
        <name>substrate</name>
    </ligand>
</feature>
<feature type="site" description="Transition state stabilizer" evidence="1">
    <location>
        <position position="32"/>
    </location>
</feature>
<feature type="site" description="Transition state stabilizer" evidence="1">
    <location>
        <position position="250"/>
    </location>
</feature>
<accession>Q2YA02</accession>
<comment type="function">
    <text evidence="1">Catalyzes the ATP-dependent phosphorylation of N-acetyl-L-glutamate.</text>
</comment>
<comment type="catalytic activity">
    <reaction evidence="1">
        <text>N-acetyl-L-glutamate + ATP = N-acetyl-L-glutamyl 5-phosphate + ADP</text>
        <dbReference type="Rhea" id="RHEA:14629"/>
        <dbReference type="ChEBI" id="CHEBI:30616"/>
        <dbReference type="ChEBI" id="CHEBI:44337"/>
        <dbReference type="ChEBI" id="CHEBI:57936"/>
        <dbReference type="ChEBI" id="CHEBI:456216"/>
        <dbReference type="EC" id="2.7.2.8"/>
    </reaction>
</comment>
<comment type="pathway">
    <text evidence="1">Amino-acid biosynthesis; L-arginine biosynthesis; N(2)-acetyl-L-ornithine from L-glutamate: step 2/4.</text>
</comment>
<comment type="subcellular location">
    <subcellularLocation>
        <location evidence="1">Cytoplasm</location>
    </subcellularLocation>
</comment>
<comment type="similarity">
    <text evidence="1">Belongs to the acetylglutamate kinase family. ArgB subfamily.</text>
</comment>
<name>ARGB_NITMU</name>
<gene>
    <name evidence="1" type="primary">argB</name>
    <name type="ordered locus">Nmul_A1116</name>
</gene>
<organism>
    <name type="scientific">Nitrosospira multiformis (strain ATCC 25196 / NCIMB 11849 / C 71)</name>
    <dbReference type="NCBI Taxonomy" id="323848"/>
    <lineage>
        <taxon>Bacteria</taxon>
        <taxon>Pseudomonadati</taxon>
        <taxon>Pseudomonadota</taxon>
        <taxon>Betaproteobacteria</taxon>
        <taxon>Nitrosomonadales</taxon>
        <taxon>Nitrosomonadaceae</taxon>
        <taxon>Nitrosospira</taxon>
    </lineage>
</organism>
<reference key="1">
    <citation type="submission" date="2005-08" db="EMBL/GenBank/DDBJ databases">
        <title>Complete sequence of chromosome 1 of Nitrosospira multiformis ATCC 25196.</title>
        <authorList>
            <person name="Copeland A."/>
            <person name="Lucas S."/>
            <person name="Lapidus A."/>
            <person name="Barry K."/>
            <person name="Detter J.C."/>
            <person name="Glavina T."/>
            <person name="Hammon N."/>
            <person name="Israni S."/>
            <person name="Pitluck S."/>
            <person name="Chain P."/>
            <person name="Malfatti S."/>
            <person name="Shin M."/>
            <person name="Vergez L."/>
            <person name="Schmutz J."/>
            <person name="Larimer F."/>
            <person name="Land M."/>
            <person name="Hauser L."/>
            <person name="Kyrpides N."/>
            <person name="Lykidis A."/>
            <person name="Richardson P."/>
        </authorList>
    </citation>
    <scope>NUCLEOTIDE SEQUENCE [LARGE SCALE GENOMIC DNA]</scope>
    <source>
        <strain>ATCC 25196 / NCIMB 11849 / C 71</strain>
    </source>
</reference>
<sequence length="293" mass="31169">MPSQPSSQDKAKILAEALPYIQRFHGKTIVIKYGGNAMTEENLKKCFAHDVALLKVVGMNPVIVHGGGPQINDMLKRVGKQGAFIQGMRVTDAETMDVVEMVLGLINKEIVNLINQHGGRAVGLTGKDGSFIRAKKMLVRDKERGQEWVDLGQVGEIEGIDPALIELLETRDFIPVIAPVGVGSRGESYNINADLVAGGLALVLNAEKLILLTNTPGVLNKDGSLLTGLTAQEVDELIADGTISGGMIPKISSALDAVKSGVKTCHIIDGRVEHGLLLEVLTDEGVGTLIKAN</sequence>
<evidence type="ECO:0000255" key="1">
    <source>
        <dbReference type="HAMAP-Rule" id="MF_00082"/>
    </source>
</evidence>
<proteinExistence type="inferred from homology"/>
<protein>
    <recommendedName>
        <fullName evidence="1">Acetylglutamate kinase</fullName>
        <ecNumber evidence="1">2.7.2.8</ecNumber>
    </recommendedName>
    <alternativeName>
        <fullName evidence="1">N-acetyl-L-glutamate 5-phosphotransferase</fullName>
    </alternativeName>
    <alternativeName>
        <fullName evidence="1">NAG kinase</fullName>
        <shortName evidence="1">NAGK</shortName>
    </alternativeName>
</protein>
<keyword id="KW-0028">Amino-acid biosynthesis</keyword>
<keyword id="KW-0055">Arginine biosynthesis</keyword>
<keyword id="KW-0067">ATP-binding</keyword>
<keyword id="KW-0963">Cytoplasm</keyword>
<keyword id="KW-0418">Kinase</keyword>
<keyword id="KW-0547">Nucleotide-binding</keyword>
<keyword id="KW-1185">Reference proteome</keyword>
<keyword id="KW-0808">Transferase</keyword>